<proteinExistence type="inferred from homology"/>
<gene>
    <name evidence="1" type="primary">infA</name>
    <name type="ordered locus">Mpe_A3422</name>
</gene>
<keyword id="KW-0963">Cytoplasm</keyword>
<keyword id="KW-0396">Initiation factor</keyword>
<keyword id="KW-0648">Protein biosynthesis</keyword>
<keyword id="KW-1185">Reference proteome</keyword>
<keyword id="KW-0694">RNA-binding</keyword>
<keyword id="KW-0699">rRNA-binding</keyword>
<accession>A2SLD6</accession>
<sequence>MSKDDVIQMQGEILENLPNATFRVKLENGHVVLGHISGKMRMHYIRILPGDKVTVELTPYDLSRARIVFRAK</sequence>
<feature type="chain" id="PRO_0000338858" description="Translation initiation factor IF-1">
    <location>
        <begin position="1"/>
        <end position="72"/>
    </location>
</feature>
<feature type="domain" description="S1-like" evidence="1">
    <location>
        <begin position="1"/>
        <end position="72"/>
    </location>
</feature>
<organism>
    <name type="scientific">Methylibium petroleiphilum (strain ATCC BAA-1232 / LMG 22953 / PM1)</name>
    <dbReference type="NCBI Taxonomy" id="420662"/>
    <lineage>
        <taxon>Bacteria</taxon>
        <taxon>Pseudomonadati</taxon>
        <taxon>Pseudomonadota</taxon>
        <taxon>Betaproteobacteria</taxon>
        <taxon>Burkholderiales</taxon>
        <taxon>Sphaerotilaceae</taxon>
        <taxon>Methylibium</taxon>
    </lineage>
</organism>
<dbReference type="EMBL" id="CP000555">
    <property type="protein sequence ID" value="ABM96375.1"/>
    <property type="molecule type" value="Genomic_DNA"/>
</dbReference>
<dbReference type="RefSeq" id="WP_011830996.1">
    <property type="nucleotide sequence ID" value="NC_008825.1"/>
</dbReference>
<dbReference type="SMR" id="A2SLD6"/>
<dbReference type="STRING" id="420662.Mpe_A3422"/>
<dbReference type="KEGG" id="mpt:Mpe_A3422"/>
<dbReference type="eggNOG" id="COG0361">
    <property type="taxonomic scope" value="Bacteria"/>
</dbReference>
<dbReference type="HOGENOM" id="CLU_151267_1_0_4"/>
<dbReference type="Proteomes" id="UP000000366">
    <property type="component" value="Chromosome"/>
</dbReference>
<dbReference type="GO" id="GO:0005829">
    <property type="term" value="C:cytosol"/>
    <property type="evidence" value="ECO:0007669"/>
    <property type="project" value="TreeGrafter"/>
</dbReference>
<dbReference type="GO" id="GO:0043022">
    <property type="term" value="F:ribosome binding"/>
    <property type="evidence" value="ECO:0007669"/>
    <property type="project" value="UniProtKB-UniRule"/>
</dbReference>
<dbReference type="GO" id="GO:0019843">
    <property type="term" value="F:rRNA binding"/>
    <property type="evidence" value="ECO:0007669"/>
    <property type="project" value="UniProtKB-UniRule"/>
</dbReference>
<dbReference type="GO" id="GO:0003743">
    <property type="term" value="F:translation initiation factor activity"/>
    <property type="evidence" value="ECO:0007669"/>
    <property type="project" value="UniProtKB-UniRule"/>
</dbReference>
<dbReference type="CDD" id="cd04451">
    <property type="entry name" value="S1_IF1"/>
    <property type="match status" value="1"/>
</dbReference>
<dbReference type="FunFam" id="2.40.50.140:FF:000002">
    <property type="entry name" value="Translation initiation factor IF-1"/>
    <property type="match status" value="1"/>
</dbReference>
<dbReference type="Gene3D" id="2.40.50.140">
    <property type="entry name" value="Nucleic acid-binding proteins"/>
    <property type="match status" value="1"/>
</dbReference>
<dbReference type="HAMAP" id="MF_00075">
    <property type="entry name" value="IF_1"/>
    <property type="match status" value="1"/>
</dbReference>
<dbReference type="InterPro" id="IPR012340">
    <property type="entry name" value="NA-bd_OB-fold"/>
</dbReference>
<dbReference type="InterPro" id="IPR006196">
    <property type="entry name" value="RNA-binding_domain_S1_IF1"/>
</dbReference>
<dbReference type="InterPro" id="IPR004368">
    <property type="entry name" value="TIF_IF1"/>
</dbReference>
<dbReference type="NCBIfam" id="TIGR00008">
    <property type="entry name" value="infA"/>
    <property type="match status" value="1"/>
</dbReference>
<dbReference type="PANTHER" id="PTHR33370">
    <property type="entry name" value="TRANSLATION INITIATION FACTOR IF-1, CHLOROPLASTIC"/>
    <property type="match status" value="1"/>
</dbReference>
<dbReference type="PANTHER" id="PTHR33370:SF1">
    <property type="entry name" value="TRANSLATION INITIATION FACTOR IF-1, CHLOROPLASTIC"/>
    <property type="match status" value="1"/>
</dbReference>
<dbReference type="Pfam" id="PF01176">
    <property type="entry name" value="eIF-1a"/>
    <property type="match status" value="1"/>
</dbReference>
<dbReference type="SUPFAM" id="SSF50249">
    <property type="entry name" value="Nucleic acid-binding proteins"/>
    <property type="match status" value="1"/>
</dbReference>
<dbReference type="PROSITE" id="PS50832">
    <property type="entry name" value="S1_IF1_TYPE"/>
    <property type="match status" value="1"/>
</dbReference>
<name>IF1_METPP</name>
<reference key="1">
    <citation type="journal article" date="2007" name="J. Bacteriol.">
        <title>Whole-genome analysis of the methyl tert-butyl ether-degrading beta-proteobacterium Methylibium petroleiphilum PM1.</title>
        <authorList>
            <person name="Kane S.R."/>
            <person name="Chakicherla A.Y."/>
            <person name="Chain P.S.G."/>
            <person name="Schmidt R."/>
            <person name="Shin M.W."/>
            <person name="Legler T.C."/>
            <person name="Scow K.M."/>
            <person name="Larimer F.W."/>
            <person name="Lucas S.M."/>
            <person name="Richardson P.M."/>
            <person name="Hristova K.R."/>
        </authorList>
    </citation>
    <scope>NUCLEOTIDE SEQUENCE [LARGE SCALE GENOMIC DNA]</scope>
    <source>
        <strain>ATCC BAA-1232 / LMG 22953 / PM1</strain>
    </source>
</reference>
<comment type="function">
    <text evidence="1">One of the essential components for the initiation of protein synthesis. Stabilizes the binding of IF-2 and IF-3 on the 30S subunit to which N-formylmethionyl-tRNA(fMet) subsequently binds. Helps modulate mRNA selection, yielding the 30S pre-initiation complex (PIC). Upon addition of the 50S ribosomal subunit IF-1, IF-2 and IF-3 are released leaving the mature 70S translation initiation complex.</text>
</comment>
<comment type="subunit">
    <text evidence="1">Component of the 30S ribosomal translation pre-initiation complex which assembles on the 30S ribosome in the order IF-2 and IF-3, IF-1 and N-formylmethionyl-tRNA(fMet); mRNA recruitment can occur at any time during PIC assembly.</text>
</comment>
<comment type="subcellular location">
    <subcellularLocation>
        <location evidence="1">Cytoplasm</location>
    </subcellularLocation>
</comment>
<comment type="similarity">
    <text evidence="1">Belongs to the IF-1 family.</text>
</comment>
<protein>
    <recommendedName>
        <fullName evidence="1">Translation initiation factor IF-1</fullName>
    </recommendedName>
</protein>
<evidence type="ECO:0000255" key="1">
    <source>
        <dbReference type="HAMAP-Rule" id="MF_00075"/>
    </source>
</evidence>